<name>RTNLJ_ARATH</name>
<reference key="1">
    <citation type="journal article" date="1999" name="Nature">
        <title>Sequence and analysis of chromosome 2 of the plant Arabidopsis thaliana.</title>
        <authorList>
            <person name="Lin X."/>
            <person name="Kaul S."/>
            <person name="Rounsley S.D."/>
            <person name="Shea T.P."/>
            <person name="Benito M.-I."/>
            <person name="Town C.D."/>
            <person name="Fujii C.Y."/>
            <person name="Mason T.M."/>
            <person name="Bowman C.L."/>
            <person name="Barnstead M.E."/>
            <person name="Feldblyum T.V."/>
            <person name="Buell C.R."/>
            <person name="Ketchum K.A."/>
            <person name="Lee J.J."/>
            <person name="Ronning C.M."/>
            <person name="Koo H.L."/>
            <person name="Moffat K.S."/>
            <person name="Cronin L.A."/>
            <person name="Shen M."/>
            <person name="Pai G."/>
            <person name="Van Aken S."/>
            <person name="Umayam L."/>
            <person name="Tallon L.J."/>
            <person name="Gill J.E."/>
            <person name="Adams M.D."/>
            <person name="Carrera A.J."/>
            <person name="Creasy T.H."/>
            <person name="Goodman H.M."/>
            <person name="Somerville C.R."/>
            <person name="Copenhaver G.P."/>
            <person name="Preuss D."/>
            <person name="Nierman W.C."/>
            <person name="White O."/>
            <person name="Eisen J.A."/>
            <person name="Salzberg S.L."/>
            <person name="Fraser C.M."/>
            <person name="Venter J.C."/>
        </authorList>
    </citation>
    <scope>NUCLEOTIDE SEQUENCE [LARGE SCALE GENOMIC DNA]</scope>
    <source>
        <strain>cv. Columbia</strain>
    </source>
</reference>
<reference key="2">
    <citation type="journal article" date="2017" name="Plant J.">
        <title>Araport11: a complete reannotation of the Arabidopsis thaliana reference genome.</title>
        <authorList>
            <person name="Cheng C.Y."/>
            <person name="Krishnakumar V."/>
            <person name="Chan A.P."/>
            <person name="Thibaud-Nissen F."/>
            <person name="Schobel S."/>
            <person name="Town C.D."/>
        </authorList>
    </citation>
    <scope>GENOME REANNOTATION</scope>
    <source>
        <strain>cv. Columbia</strain>
    </source>
</reference>
<reference key="3">
    <citation type="journal article" date="2004" name="Genome Res.">
        <title>Whole genome sequence comparisons and 'full-length' cDNA sequences: a combined approach to evaluate and improve Arabidopsis genome annotation.</title>
        <authorList>
            <person name="Castelli V."/>
            <person name="Aury J.-M."/>
            <person name="Jaillon O."/>
            <person name="Wincker P."/>
            <person name="Clepet C."/>
            <person name="Menard M."/>
            <person name="Cruaud C."/>
            <person name="Quetier F."/>
            <person name="Scarpelli C."/>
            <person name="Schaechter V."/>
            <person name="Temple G."/>
            <person name="Caboche M."/>
            <person name="Weissenbach J."/>
            <person name="Salanoubat M."/>
        </authorList>
    </citation>
    <scope>NUCLEOTIDE SEQUENCE [LARGE SCALE MRNA] (ISOFORM 2)</scope>
    <source>
        <strain>cv. Columbia</strain>
    </source>
</reference>
<reference key="4">
    <citation type="submission" date="2003-12" db="EMBL/GenBank/DDBJ databases">
        <title>Arabidopsis ORF clones.</title>
        <authorList>
            <person name="Shinn P."/>
            <person name="Chen H."/>
            <person name="Cheuk R.F."/>
            <person name="Kim C.J."/>
            <person name="Ecker J.R."/>
        </authorList>
    </citation>
    <scope>NUCLEOTIDE SEQUENCE [LARGE SCALE MRNA] (ISOFORM 1)</scope>
    <source>
        <strain>cv. Columbia</strain>
    </source>
</reference>
<reference key="5">
    <citation type="journal article" date="2007" name="FEBS Lett.">
        <title>Reticulon-like proteins in Arabidopsis thaliana: structural organization and ER localization.</title>
        <authorList>
            <person name="Nziengui H."/>
            <person name="Bouhidel K."/>
            <person name="Pillon D."/>
            <person name="Der C."/>
            <person name="Marty F."/>
            <person name="Schoefs B."/>
        </authorList>
    </citation>
    <scope>GENE FAMILY</scope>
    <scope>NOMENCLATURE</scope>
</reference>
<feature type="chain" id="PRO_0000371291" description="Reticulon-like protein B10">
    <location>
        <begin position="1"/>
        <end position="201"/>
    </location>
</feature>
<feature type="transmembrane region" description="Helical" evidence="2">
    <location>
        <begin position="25"/>
        <end position="45"/>
    </location>
</feature>
<feature type="transmembrane region" description="Helical" evidence="2">
    <location>
        <begin position="46"/>
        <end position="66"/>
    </location>
</feature>
<feature type="transmembrane region" description="Helical" evidence="2">
    <location>
        <begin position="135"/>
        <end position="155"/>
    </location>
</feature>
<feature type="domain" description="Reticulon" evidence="3">
    <location>
        <begin position="14"/>
        <end position="201"/>
    </location>
</feature>
<feature type="splice variant" id="VSP_037007" description="In isoform 2." evidence="4">
    <location>
        <begin position="122"/>
        <end position="160"/>
    </location>
</feature>
<organism>
    <name type="scientific">Arabidopsis thaliana</name>
    <name type="common">Mouse-ear cress</name>
    <dbReference type="NCBI Taxonomy" id="3702"/>
    <lineage>
        <taxon>Eukaryota</taxon>
        <taxon>Viridiplantae</taxon>
        <taxon>Streptophyta</taxon>
        <taxon>Embryophyta</taxon>
        <taxon>Tracheophyta</taxon>
        <taxon>Spermatophyta</taxon>
        <taxon>Magnoliopsida</taxon>
        <taxon>eudicotyledons</taxon>
        <taxon>Gunneridae</taxon>
        <taxon>Pentapetalae</taxon>
        <taxon>rosids</taxon>
        <taxon>malvids</taxon>
        <taxon>Brassicales</taxon>
        <taxon>Brassicaceae</taxon>
        <taxon>Camelineae</taxon>
        <taxon>Arabidopsis</taxon>
    </lineage>
</organism>
<sequence length="201" mass="23483">MEESVHQSIRFGSVADLIMWKNRRGGFLLLGSTTLLWFLFEKCGYSFFPFVVNTQLLSVVILFLWAKSAILFNRPMPQLPNLEITEEFVFMVADAIRVWINTVLAVAREIYVGRNAKQLFRVSVVLWTVSFVGNFLNFLTILYLGVVLSLLIPFLYERYQDLIDEKLSLTHRVIQTQYRKIDERLLQKIIAKPTNKIKKMQ</sequence>
<accession>Q6NPD8</accession>
<accession>Q3EC00</accession>
<accession>Q9SHU8</accession>
<dbReference type="EMBL" id="AC007267">
    <property type="protein sequence ID" value="AAD26905.1"/>
    <property type="status" value="ALT_SEQ"/>
    <property type="molecule type" value="Genomic_DNA"/>
</dbReference>
<dbReference type="EMBL" id="CP002685">
    <property type="protein sequence ID" value="AEC06381.1"/>
    <property type="molecule type" value="Genomic_DNA"/>
</dbReference>
<dbReference type="EMBL" id="CP002685">
    <property type="protein sequence ID" value="AEC06382.1"/>
    <property type="molecule type" value="Genomic_DNA"/>
</dbReference>
<dbReference type="EMBL" id="BX821446">
    <property type="status" value="NOT_ANNOTATED_CDS"/>
    <property type="molecule type" value="mRNA"/>
</dbReference>
<dbReference type="EMBL" id="BT010716">
    <property type="protein sequence ID" value="AAR20773.1"/>
    <property type="molecule type" value="mRNA"/>
</dbReference>
<dbReference type="EMBL" id="BT010986">
    <property type="protein sequence ID" value="AAR24764.1"/>
    <property type="molecule type" value="mRNA"/>
</dbReference>
<dbReference type="PIR" id="A84527">
    <property type="entry name" value="A84527"/>
</dbReference>
<dbReference type="RefSeq" id="NP_179130.2">
    <molecule id="Q6NPD8-1"/>
    <property type="nucleotide sequence ID" value="NM_127088.3"/>
</dbReference>
<dbReference type="RefSeq" id="NP_973467.1">
    <molecule id="Q6NPD8-2"/>
    <property type="nucleotide sequence ID" value="NM_201738.1"/>
</dbReference>
<dbReference type="BioGRID" id="1376">
    <property type="interactions" value="11"/>
</dbReference>
<dbReference type="FunCoup" id="Q6NPD8">
    <property type="interactions" value="474"/>
</dbReference>
<dbReference type="IntAct" id="Q6NPD8">
    <property type="interactions" value="11"/>
</dbReference>
<dbReference type="STRING" id="3702.Q6NPD8"/>
<dbReference type="PaxDb" id="3702-AT2G15280.1"/>
<dbReference type="ProteomicsDB" id="226678">
    <molecule id="Q6NPD8-1"/>
</dbReference>
<dbReference type="EnsemblPlants" id="AT2G15280.1">
    <molecule id="Q6NPD8-1"/>
    <property type="protein sequence ID" value="AT2G15280.1"/>
    <property type="gene ID" value="AT2G15280"/>
</dbReference>
<dbReference type="EnsemblPlants" id="AT2G15280.2">
    <molecule id="Q6NPD8-2"/>
    <property type="protein sequence ID" value="AT2G15280.2"/>
    <property type="gene ID" value="AT2G15280"/>
</dbReference>
<dbReference type="GeneID" id="816017"/>
<dbReference type="Gramene" id="AT2G15280.1">
    <molecule id="Q6NPD8-1"/>
    <property type="protein sequence ID" value="AT2G15280.1"/>
    <property type="gene ID" value="AT2G15280"/>
</dbReference>
<dbReference type="Gramene" id="AT2G15280.2">
    <molecule id="Q6NPD8-2"/>
    <property type="protein sequence ID" value="AT2G15280.2"/>
    <property type="gene ID" value="AT2G15280"/>
</dbReference>
<dbReference type="KEGG" id="ath:AT2G15280"/>
<dbReference type="Araport" id="AT2G15280"/>
<dbReference type="TAIR" id="AT2G15280">
    <property type="gene designation" value="RTNLB10"/>
</dbReference>
<dbReference type="eggNOG" id="KOG1792">
    <property type="taxonomic scope" value="Eukaryota"/>
</dbReference>
<dbReference type="HOGENOM" id="CLU_066344_0_2_1"/>
<dbReference type="InParanoid" id="Q6NPD8"/>
<dbReference type="OMA" id="RYQDHID"/>
<dbReference type="PhylomeDB" id="Q6NPD8"/>
<dbReference type="PRO" id="PR:Q6NPD8"/>
<dbReference type="Proteomes" id="UP000006548">
    <property type="component" value="Chromosome 2"/>
</dbReference>
<dbReference type="ExpressionAtlas" id="Q6NPD8">
    <property type="expression patterns" value="baseline and differential"/>
</dbReference>
<dbReference type="GO" id="GO:0005789">
    <property type="term" value="C:endoplasmic reticulum membrane"/>
    <property type="evidence" value="ECO:0007669"/>
    <property type="project" value="UniProtKB-SubCell"/>
</dbReference>
<dbReference type="GO" id="GO:0009617">
    <property type="term" value="P:response to bacterium"/>
    <property type="evidence" value="ECO:0007669"/>
    <property type="project" value="InterPro"/>
</dbReference>
<dbReference type="InterPro" id="IPR003388">
    <property type="entry name" value="Reticulon"/>
</dbReference>
<dbReference type="InterPro" id="IPR045064">
    <property type="entry name" value="Reticulon-like"/>
</dbReference>
<dbReference type="PANTHER" id="PTHR10994">
    <property type="entry name" value="RETICULON"/>
    <property type="match status" value="1"/>
</dbReference>
<dbReference type="PANTHER" id="PTHR10994:SF141">
    <property type="entry name" value="RETICULON-LIKE PROTEIN B10"/>
    <property type="match status" value="1"/>
</dbReference>
<dbReference type="Pfam" id="PF02453">
    <property type="entry name" value="Reticulon"/>
    <property type="match status" value="1"/>
</dbReference>
<dbReference type="PROSITE" id="PS50845">
    <property type="entry name" value="RETICULON"/>
    <property type="match status" value="1"/>
</dbReference>
<keyword id="KW-0025">Alternative splicing</keyword>
<keyword id="KW-0256">Endoplasmic reticulum</keyword>
<keyword id="KW-0472">Membrane</keyword>
<keyword id="KW-1185">Reference proteome</keyword>
<keyword id="KW-0812">Transmembrane</keyword>
<keyword id="KW-1133">Transmembrane helix</keyword>
<proteinExistence type="evidence at transcript level"/>
<protein>
    <recommendedName>
        <fullName>Reticulon-like protein B10</fullName>
        <shortName>AtRTNLB10</shortName>
    </recommendedName>
</protein>
<comment type="subcellular location">
    <subcellularLocation>
        <location evidence="1">Endoplasmic reticulum membrane</location>
        <topology evidence="2">Multi-pass membrane protein</topology>
    </subcellularLocation>
</comment>
<comment type="alternative products">
    <event type="alternative splicing"/>
    <isoform>
        <id>Q6NPD8-1</id>
        <name>1</name>
        <sequence type="displayed"/>
    </isoform>
    <isoform>
        <id>Q6NPD8-2</id>
        <name>2</name>
        <sequence type="described" ref="VSP_037007"/>
    </isoform>
</comment>
<comment type="sequence caution" evidence="5">
    <conflict type="erroneous gene model prediction">
        <sequence resource="EMBL-CDS" id="AAD26905"/>
    </conflict>
</comment>
<gene>
    <name type="primary">RTNLB10</name>
    <name type="ordered locus">At2g15280</name>
    <name type="ORF">F27O10.7</name>
</gene>
<evidence type="ECO:0000250" key="1">
    <source>
        <dbReference type="UniProtKB" id="Q9SH59"/>
    </source>
</evidence>
<evidence type="ECO:0000255" key="2"/>
<evidence type="ECO:0000255" key="3">
    <source>
        <dbReference type="PROSITE-ProRule" id="PRU00170"/>
    </source>
</evidence>
<evidence type="ECO:0000303" key="4">
    <source>
    </source>
</evidence>
<evidence type="ECO:0000305" key="5"/>